<accession>O89029</accession>
<accession>O89030</accession>
<accession>Q9QWS3</accession>
<sequence length="624" mass="68918">MRGPCCWPLSLLLLFLQSWETQLQSAGPRCYNGPLDLVFMIDSSRSVRPFEFETMRQFLVGLLRSLDVGLNATRVGVIQYSSQVQSVFPLGAFSRREDMERAIRAVVPLAQGTMTGLAIQYAMNVAFSEAEGARPSEERVPRVLVIVTDGRPQDRVAEVAAQARARGIEIYAVGVQRADVGSLRTMASPPLDQHVFLVESFDLIQEFGLQFQGRLCGKDLCAELVHGCQHLCVNAPGTFYCACNSGYKLAPDNKNCLALDLCAEGTHGCEHLCVNSVDSYFCRCRAGFALQQDQRSCRAIDYCSFGNHSCQHECVSTLAGPQCRCREGHDLLPDGRSCRVRDFCNGVDHGCEFQCVSEGLSFHCLCPEGRRLQADGKSCDRCREGHVDLVLLVDGSKSVRPQNFELVKRFVNQIVDFLDVSPEGTRVGLVQFSSRVRTEFPLGRYGTAAEVKQAVLAVEYMERGTMTGLALRHMVEHSFSEAQGARPRDLNVPRVGLVFTDGRSQDDISVWAARAKEEGIVMYAVGVGKAVEEELREIASEPSELHVSYSPDFSTMTHLLENLKGSICPEEGIGAGTELRSPCECESLVEFQGRTLGALESLTQNLARLTERLEELENQLASRK</sequence>
<dbReference type="EMBL" id="AJ006140">
    <property type="protein sequence ID" value="CAA06889.1"/>
    <property type="molecule type" value="mRNA"/>
</dbReference>
<dbReference type="EMBL" id="AJ006140">
    <property type="protein sequence ID" value="CAA06890.1"/>
    <property type="molecule type" value="mRNA"/>
</dbReference>
<dbReference type="EMBL" id="BC036558">
    <property type="protein sequence ID" value="AAH36558.1"/>
    <property type="molecule type" value="mRNA"/>
</dbReference>
<dbReference type="EMBL" id="AJ010984">
    <property type="protein sequence ID" value="CAA09451.1"/>
    <property type="molecule type" value="Genomic_DNA"/>
</dbReference>
<dbReference type="CCDS" id="CCDS17034.1">
    <molecule id="O89029-1"/>
</dbReference>
<dbReference type="RefSeq" id="NP_001239492.1">
    <property type="nucleotide sequence ID" value="NM_001252563.1"/>
</dbReference>
<dbReference type="SMR" id="O89029"/>
<dbReference type="BioGRID" id="201323">
    <property type="interactions" value="2"/>
</dbReference>
<dbReference type="ComplexPortal" id="CPX-4661">
    <property type="entry name" value="Matrilin-4 complex"/>
</dbReference>
<dbReference type="FunCoup" id="O89029">
    <property type="interactions" value="61"/>
</dbReference>
<dbReference type="STRING" id="10090.ENSMUSP00000099392"/>
<dbReference type="GlyCosmos" id="O89029">
    <property type="glycosylation" value="2 sites, No reported glycans"/>
</dbReference>
<dbReference type="GlyGen" id="O89029">
    <property type="glycosylation" value="2 sites, 3 N-linked glycans (2 sites)"/>
</dbReference>
<dbReference type="PhosphoSitePlus" id="O89029"/>
<dbReference type="jPOST" id="O89029"/>
<dbReference type="PaxDb" id="10090-ENSMUSP00000099392"/>
<dbReference type="ProteomicsDB" id="295700">
    <molecule id="O89029-1"/>
</dbReference>
<dbReference type="ProteomicsDB" id="295701">
    <molecule id="O89029-2"/>
</dbReference>
<dbReference type="DNASU" id="17183"/>
<dbReference type="GeneID" id="17183"/>
<dbReference type="KEGG" id="mmu:17183"/>
<dbReference type="AGR" id="MGI:1328314"/>
<dbReference type="CTD" id="8785"/>
<dbReference type="MGI" id="MGI:1328314">
    <property type="gene designation" value="Matn4"/>
</dbReference>
<dbReference type="eggNOG" id="KOG1217">
    <property type="taxonomic scope" value="Eukaryota"/>
</dbReference>
<dbReference type="InParanoid" id="O89029"/>
<dbReference type="OrthoDB" id="6022609at2759"/>
<dbReference type="PhylomeDB" id="O89029"/>
<dbReference type="Reactome" id="R-MMU-3000178">
    <property type="pathway name" value="ECM proteoglycans"/>
</dbReference>
<dbReference type="BioGRID-ORCS" id="17183">
    <property type="hits" value="0 hits in 76 CRISPR screens"/>
</dbReference>
<dbReference type="CD-CODE" id="CE726F99">
    <property type="entry name" value="Postsynaptic density"/>
</dbReference>
<dbReference type="ChiTaRS" id="Matn4">
    <property type="organism name" value="mouse"/>
</dbReference>
<dbReference type="PRO" id="PR:O89029"/>
<dbReference type="Proteomes" id="UP000000589">
    <property type="component" value="Unplaced"/>
</dbReference>
<dbReference type="RNAct" id="O89029">
    <property type="molecule type" value="protein"/>
</dbReference>
<dbReference type="GO" id="GO:0062023">
    <property type="term" value="C:collagen-containing extracellular matrix"/>
    <property type="evidence" value="ECO:0007005"/>
    <property type="project" value="BHF-UCL"/>
</dbReference>
<dbReference type="GO" id="GO:0005576">
    <property type="term" value="C:extracellular region"/>
    <property type="evidence" value="ECO:0007669"/>
    <property type="project" value="UniProtKB-SubCell"/>
</dbReference>
<dbReference type="GO" id="GO:0120216">
    <property type="term" value="C:matrilin complex"/>
    <property type="evidence" value="ECO:0000353"/>
    <property type="project" value="ComplexPortal"/>
</dbReference>
<dbReference type="GO" id="GO:0005509">
    <property type="term" value="F:calcium ion binding"/>
    <property type="evidence" value="ECO:0007669"/>
    <property type="project" value="InterPro"/>
</dbReference>
<dbReference type="GO" id="GO:0030198">
    <property type="term" value="P:extracellular matrix organization"/>
    <property type="evidence" value="ECO:0000303"/>
    <property type="project" value="ComplexPortal"/>
</dbReference>
<dbReference type="GO" id="GO:0048678">
    <property type="term" value="P:response to axon injury"/>
    <property type="evidence" value="ECO:0000314"/>
    <property type="project" value="MGI"/>
</dbReference>
<dbReference type="CDD" id="cd01475">
    <property type="entry name" value="vWA_Matrilin"/>
    <property type="match status" value="2"/>
</dbReference>
<dbReference type="FunFam" id="3.40.50.410:FF:000004">
    <property type="entry name" value="collagen alpha-6(VI) chain"/>
    <property type="match status" value="2"/>
</dbReference>
<dbReference type="FunFam" id="2.10.25.10:FF:000227">
    <property type="entry name" value="Matrilin 4"/>
    <property type="match status" value="1"/>
</dbReference>
<dbReference type="FunFam" id="2.10.25.10:FF:000041">
    <property type="entry name" value="matrilin-2 isoform X1"/>
    <property type="match status" value="2"/>
</dbReference>
<dbReference type="FunFam" id="1.20.5.30:FF:000002">
    <property type="entry name" value="matrilin-4 isoform X1"/>
    <property type="match status" value="1"/>
</dbReference>
<dbReference type="FunFam" id="2.10.25.10:FF:000386">
    <property type="entry name" value="matrilin-4 isoform X1"/>
    <property type="match status" value="1"/>
</dbReference>
<dbReference type="Gene3D" id="1.20.5.30">
    <property type="match status" value="1"/>
</dbReference>
<dbReference type="Gene3D" id="2.10.25.10">
    <property type="entry name" value="Laminin"/>
    <property type="match status" value="4"/>
</dbReference>
<dbReference type="Gene3D" id="3.40.50.410">
    <property type="entry name" value="von Willebrand factor, type A domain"/>
    <property type="match status" value="2"/>
</dbReference>
<dbReference type="InterPro" id="IPR050525">
    <property type="entry name" value="ECM_Assembly_Org"/>
</dbReference>
<dbReference type="InterPro" id="IPR001881">
    <property type="entry name" value="EGF-like_Ca-bd_dom"/>
</dbReference>
<dbReference type="InterPro" id="IPR000742">
    <property type="entry name" value="EGF-like_dom"/>
</dbReference>
<dbReference type="InterPro" id="IPR009030">
    <property type="entry name" value="Growth_fac_rcpt_cys_sf"/>
</dbReference>
<dbReference type="InterPro" id="IPR036337">
    <property type="entry name" value="Matrilin_cc_sf"/>
</dbReference>
<dbReference type="InterPro" id="IPR019466">
    <property type="entry name" value="Matrilin_coiled-coil_trimer"/>
</dbReference>
<dbReference type="InterPro" id="IPR002035">
    <property type="entry name" value="VWF_A"/>
</dbReference>
<dbReference type="InterPro" id="IPR036465">
    <property type="entry name" value="vWFA_dom_sf"/>
</dbReference>
<dbReference type="PANTHER" id="PTHR24020">
    <property type="entry name" value="COLLAGEN ALPHA"/>
    <property type="match status" value="1"/>
</dbReference>
<dbReference type="PANTHER" id="PTHR24020:SF14">
    <property type="entry name" value="MATRILIN-4"/>
    <property type="match status" value="1"/>
</dbReference>
<dbReference type="Pfam" id="PF14670">
    <property type="entry name" value="FXa_inhibition"/>
    <property type="match status" value="2"/>
</dbReference>
<dbReference type="Pfam" id="PF10393">
    <property type="entry name" value="Matrilin_ccoil"/>
    <property type="match status" value="1"/>
</dbReference>
<dbReference type="Pfam" id="PF00092">
    <property type="entry name" value="VWA"/>
    <property type="match status" value="2"/>
</dbReference>
<dbReference type="PRINTS" id="PR00453">
    <property type="entry name" value="VWFADOMAIN"/>
</dbReference>
<dbReference type="SMART" id="SM00181">
    <property type="entry name" value="EGF"/>
    <property type="match status" value="4"/>
</dbReference>
<dbReference type="SMART" id="SM00179">
    <property type="entry name" value="EGF_CA"/>
    <property type="match status" value="4"/>
</dbReference>
<dbReference type="SMART" id="SM01279">
    <property type="entry name" value="Matrilin_ccoil"/>
    <property type="match status" value="1"/>
</dbReference>
<dbReference type="SMART" id="SM00327">
    <property type="entry name" value="VWA"/>
    <property type="match status" value="2"/>
</dbReference>
<dbReference type="SUPFAM" id="SSF58002">
    <property type="entry name" value="Chicken cartilage matrix protein"/>
    <property type="match status" value="1"/>
</dbReference>
<dbReference type="SUPFAM" id="SSF57184">
    <property type="entry name" value="Growth factor receptor domain"/>
    <property type="match status" value="1"/>
</dbReference>
<dbReference type="SUPFAM" id="SSF53300">
    <property type="entry name" value="vWA-like"/>
    <property type="match status" value="2"/>
</dbReference>
<dbReference type="PROSITE" id="PS00010">
    <property type="entry name" value="ASX_HYDROXYL"/>
    <property type="match status" value="2"/>
</dbReference>
<dbReference type="PROSITE" id="PS01186">
    <property type="entry name" value="EGF_2"/>
    <property type="match status" value="2"/>
</dbReference>
<dbReference type="PROSITE" id="PS50234">
    <property type="entry name" value="VWFA"/>
    <property type="match status" value="2"/>
</dbReference>
<name>MATN4_MOUSE</name>
<organism>
    <name type="scientific">Mus musculus</name>
    <name type="common">Mouse</name>
    <dbReference type="NCBI Taxonomy" id="10090"/>
    <lineage>
        <taxon>Eukaryota</taxon>
        <taxon>Metazoa</taxon>
        <taxon>Chordata</taxon>
        <taxon>Craniata</taxon>
        <taxon>Vertebrata</taxon>
        <taxon>Euteleostomi</taxon>
        <taxon>Mammalia</taxon>
        <taxon>Eutheria</taxon>
        <taxon>Euarchontoglires</taxon>
        <taxon>Glires</taxon>
        <taxon>Rodentia</taxon>
        <taxon>Myomorpha</taxon>
        <taxon>Muroidea</taxon>
        <taxon>Muridae</taxon>
        <taxon>Murinae</taxon>
        <taxon>Mus</taxon>
        <taxon>Mus</taxon>
    </lineage>
</organism>
<keyword id="KW-0025">Alternative splicing</keyword>
<keyword id="KW-0175">Coiled coil</keyword>
<keyword id="KW-1015">Disulfide bond</keyword>
<keyword id="KW-0245">EGF-like domain</keyword>
<keyword id="KW-0325">Glycoprotein</keyword>
<keyword id="KW-1185">Reference proteome</keyword>
<keyword id="KW-0677">Repeat</keyword>
<keyword id="KW-0964">Secreted</keyword>
<keyword id="KW-0732">Signal</keyword>
<protein>
    <recommendedName>
        <fullName>Matrilin-4</fullName>
        <shortName>MAT-4</shortName>
    </recommendedName>
</protein>
<reference key="1">
    <citation type="journal article" date="1998" name="FEBS Lett.">
        <title>Matrilin-4, a new member of the matrilin family of extracellular matrix proteins.</title>
        <authorList>
            <person name="Wagener R."/>
            <person name="Kobbe B."/>
            <person name="Paulsson M."/>
        </authorList>
    </citation>
    <scope>NUCLEOTIDE SEQUENCE [MRNA] (ISOFORMS LONG AND SHORT)</scope>
    <scope>VARIANTS</scope>
    <source>
        <strain>C57BL/6J</strain>
        <strain>CD-1</strain>
        <tissue>Fetus</tissue>
    </source>
</reference>
<reference key="2">
    <citation type="journal article" date="2004" name="Genome Res.">
        <title>The status, quality, and expansion of the NIH full-length cDNA project: the Mammalian Gene Collection (MGC).</title>
        <authorList>
            <consortium name="The MGC Project Team"/>
        </authorList>
    </citation>
    <scope>NUCLEOTIDE SEQUENCE [LARGE SCALE MRNA] (ISOFORM LONG)</scope>
    <source>
        <strain>C57BL/6J</strain>
        <tissue>Mammary gland</tissue>
    </source>
</reference>
<reference key="3">
    <citation type="journal article" date="1998" name="FEBS Lett.">
        <title>Genomic organisation, alternative splicing and primary structure of human matrilin-4.</title>
        <authorList>
            <person name="Wagener R."/>
            <person name="Kobbe B."/>
            <person name="Paulsson M."/>
        </authorList>
    </citation>
    <scope>NUCLEOTIDE SEQUENCE [GENOMIC DNA] OF 218-257</scope>
</reference>
<reference key="4">
    <citation type="journal article" date="2010" name="Cell">
        <title>A tissue-specific atlas of mouse protein phosphorylation and expression.</title>
        <authorList>
            <person name="Huttlin E.L."/>
            <person name="Jedrychowski M.P."/>
            <person name="Elias J.E."/>
            <person name="Goswami T."/>
            <person name="Rad R."/>
            <person name="Beausoleil S.A."/>
            <person name="Villen J."/>
            <person name="Haas W."/>
            <person name="Sowa M.E."/>
            <person name="Gygi S.P."/>
        </authorList>
    </citation>
    <scope>IDENTIFICATION BY MASS SPECTROMETRY [LARGE SCALE ANALYSIS]</scope>
    <source>
        <tissue>Brain</tissue>
    </source>
</reference>
<evidence type="ECO:0000250" key="1"/>
<evidence type="ECO:0000255" key="2"/>
<evidence type="ECO:0000255" key="3">
    <source>
        <dbReference type="PROSITE-ProRule" id="PRU00219"/>
    </source>
</evidence>
<evidence type="ECO:0000303" key="4">
    <source>
    </source>
</evidence>
<feature type="signal peptide" evidence="2">
    <location>
        <begin position="1"/>
        <end position="21"/>
    </location>
</feature>
<feature type="chain" id="PRO_0000007661" description="Matrilin-4">
    <location>
        <begin position="22"/>
        <end position="624"/>
    </location>
</feature>
<feature type="domain" description="VWFA 1" evidence="3">
    <location>
        <begin position="36"/>
        <end position="215"/>
    </location>
</feature>
<feature type="domain" description="EGF-like 1">
    <location>
        <begin position="217"/>
        <end position="257"/>
    </location>
</feature>
<feature type="domain" description="EGF-like 2">
    <location>
        <begin position="258"/>
        <end position="298"/>
    </location>
</feature>
<feature type="domain" description="EGF-like 3">
    <location>
        <begin position="299"/>
        <end position="339"/>
    </location>
</feature>
<feature type="domain" description="EGF-like 4">
    <location>
        <begin position="340"/>
        <end position="380"/>
    </location>
</feature>
<feature type="domain" description="VWFA 2" evidence="3">
    <location>
        <begin position="388"/>
        <end position="563"/>
    </location>
</feature>
<feature type="coiled-coil region" evidence="2">
    <location>
        <begin position="590"/>
        <end position="623"/>
    </location>
</feature>
<feature type="glycosylation site" description="N-linked (GlcNAc...) asparagine" evidence="2">
    <location>
        <position position="71"/>
    </location>
</feature>
<feature type="glycosylation site" description="N-linked (GlcNAc...) asparagine" evidence="2">
    <location>
        <position position="307"/>
    </location>
</feature>
<feature type="disulfide bond" evidence="1">
    <location>
        <begin position="221"/>
        <end position="232"/>
    </location>
</feature>
<feature type="disulfide bond" evidence="1">
    <location>
        <begin position="228"/>
        <end position="241"/>
    </location>
</feature>
<feature type="disulfide bond" evidence="1">
    <location>
        <begin position="243"/>
        <end position="256"/>
    </location>
</feature>
<feature type="disulfide bond" evidence="1">
    <location>
        <begin position="262"/>
        <end position="273"/>
    </location>
</feature>
<feature type="disulfide bond" evidence="1">
    <location>
        <begin position="269"/>
        <end position="282"/>
    </location>
</feature>
<feature type="disulfide bond" evidence="1">
    <location>
        <begin position="284"/>
        <end position="297"/>
    </location>
</feature>
<feature type="disulfide bond" evidence="1">
    <location>
        <begin position="303"/>
        <end position="314"/>
    </location>
</feature>
<feature type="disulfide bond" evidence="1">
    <location>
        <begin position="310"/>
        <end position="323"/>
    </location>
</feature>
<feature type="disulfide bond" evidence="1">
    <location>
        <begin position="325"/>
        <end position="338"/>
    </location>
</feature>
<feature type="disulfide bond" evidence="1">
    <location>
        <begin position="344"/>
        <end position="355"/>
    </location>
</feature>
<feature type="disulfide bond" evidence="1">
    <location>
        <begin position="351"/>
        <end position="364"/>
    </location>
</feature>
<feature type="disulfide bond" evidence="1">
    <location>
        <begin position="366"/>
        <end position="379"/>
    </location>
</feature>
<feature type="splice variant" id="VSP_001401" description="In isoform Short." evidence="4">
    <location>
        <begin position="28"/>
        <end position="217"/>
    </location>
</feature>
<feature type="sequence variant" description="In strain: C57BL/6J.">
    <original>A</original>
    <variation>E</variation>
    <location>
        <position position="319"/>
    </location>
</feature>
<feature type="sequence variant" description="In strain: C57BL/6J.">
    <original>G</original>
    <variation>D</variation>
    <location>
        <position position="346"/>
    </location>
</feature>
<comment type="function">
    <text>Major component of the extracellular matrix of cartilage.</text>
</comment>
<comment type="subunit">
    <text evidence="1">Interacts with COMP.</text>
</comment>
<comment type="subcellular location">
    <subcellularLocation>
        <location>Secreted</location>
    </subcellularLocation>
</comment>
<comment type="alternative products">
    <event type="alternative splicing"/>
    <isoform>
        <id>O89029-1</id>
        <name>Long</name>
        <sequence type="displayed"/>
    </isoform>
    <isoform>
        <id>O89029-2</id>
        <name>Short</name>
        <sequence type="described" ref="VSP_001401"/>
    </isoform>
</comment>
<comment type="tissue specificity">
    <text>Lung, brain, sternum, kidney and heart.</text>
</comment>
<comment type="developmental stage">
    <text>The short isoform was detected in 7 weeks old mice but not in developing mice (19.5 dpc embryos or in 2, 8, and 21 days old animals).</text>
</comment>
<gene>
    <name type="primary">Matn4</name>
</gene>
<proteinExistence type="evidence at protein level"/>